<protein>
    <recommendedName>
        <fullName evidence="1">tRNA pseudouridine synthase D</fullName>
        <ecNumber evidence="1">5.4.99.27</ecNumber>
    </recommendedName>
    <alternativeName>
        <fullName evidence="1">tRNA pseudouridine(13) synthase</fullName>
    </alternativeName>
    <alternativeName>
        <fullName evidence="1">tRNA pseudouridylate synthase D</fullName>
    </alternativeName>
    <alternativeName>
        <fullName evidence="1">tRNA-uridine isomerase D</fullName>
    </alternativeName>
</protein>
<comment type="function">
    <text evidence="1">Responsible for synthesis of pseudouridine from uracil-13 in transfer RNAs.</text>
</comment>
<comment type="catalytic activity">
    <reaction evidence="1">
        <text>uridine(13) in tRNA = pseudouridine(13) in tRNA</text>
        <dbReference type="Rhea" id="RHEA:42540"/>
        <dbReference type="Rhea" id="RHEA-COMP:10105"/>
        <dbReference type="Rhea" id="RHEA-COMP:10106"/>
        <dbReference type="ChEBI" id="CHEBI:65314"/>
        <dbReference type="ChEBI" id="CHEBI:65315"/>
        <dbReference type="EC" id="5.4.99.27"/>
    </reaction>
</comment>
<comment type="similarity">
    <text evidence="1">Belongs to the pseudouridine synthase TruD family.</text>
</comment>
<feature type="chain" id="PRO_0000152499" description="tRNA pseudouridine synthase D">
    <location>
        <begin position="1"/>
        <end position="408"/>
    </location>
</feature>
<feature type="domain" description="TRUD" evidence="1">
    <location>
        <begin position="157"/>
        <end position="367"/>
    </location>
</feature>
<feature type="active site" description="Nucleophile" evidence="1">
    <location>
        <position position="82"/>
    </location>
</feature>
<keyword id="KW-0413">Isomerase</keyword>
<keyword id="KW-1185">Reference proteome</keyword>
<keyword id="KW-0819">tRNA processing</keyword>
<gene>
    <name evidence="1" type="primary">truD</name>
    <name type="ordered locus">GSU0520</name>
</gene>
<dbReference type="EC" id="5.4.99.27" evidence="1"/>
<dbReference type="EMBL" id="AE017180">
    <property type="protein sequence ID" value="AAR33851.1"/>
    <property type="molecule type" value="Genomic_DNA"/>
</dbReference>
<dbReference type="RefSeq" id="NP_951578.1">
    <property type="nucleotide sequence ID" value="NC_002939.5"/>
</dbReference>
<dbReference type="RefSeq" id="WP_010941188.1">
    <property type="nucleotide sequence ID" value="NC_002939.5"/>
</dbReference>
<dbReference type="SMR" id="P60347"/>
<dbReference type="FunCoup" id="P60347">
    <property type="interactions" value="52"/>
</dbReference>
<dbReference type="STRING" id="243231.GSU0520"/>
<dbReference type="EnsemblBacteria" id="AAR33851">
    <property type="protein sequence ID" value="AAR33851"/>
    <property type="gene ID" value="GSU0520"/>
</dbReference>
<dbReference type="KEGG" id="gsu:GSU0520"/>
<dbReference type="PATRIC" id="fig|243231.5.peg.521"/>
<dbReference type="eggNOG" id="COG0585">
    <property type="taxonomic scope" value="Bacteria"/>
</dbReference>
<dbReference type="HOGENOM" id="CLU_005281_4_0_7"/>
<dbReference type="InParanoid" id="P60347"/>
<dbReference type="OrthoDB" id="1550679at2"/>
<dbReference type="Proteomes" id="UP000000577">
    <property type="component" value="Chromosome"/>
</dbReference>
<dbReference type="GO" id="GO:0009982">
    <property type="term" value="F:pseudouridine synthase activity"/>
    <property type="evidence" value="ECO:0000318"/>
    <property type="project" value="GO_Central"/>
</dbReference>
<dbReference type="GO" id="GO:0003723">
    <property type="term" value="F:RNA binding"/>
    <property type="evidence" value="ECO:0007669"/>
    <property type="project" value="InterPro"/>
</dbReference>
<dbReference type="GO" id="GO:0160150">
    <property type="term" value="F:tRNA pseudouridine(13) synthase activity"/>
    <property type="evidence" value="ECO:0007669"/>
    <property type="project" value="UniProtKB-EC"/>
</dbReference>
<dbReference type="GO" id="GO:0001522">
    <property type="term" value="P:pseudouridine synthesis"/>
    <property type="evidence" value="ECO:0000318"/>
    <property type="project" value="GO_Central"/>
</dbReference>
<dbReference type="GO" id="GO:0031119">
    <property type="term" value="P:tRNA pseudouridine synthesis"/>
    <property type="evidence" value="ECO:0007669"/>
    <property type="project" value="UniProtKB-UniRule"/>
</dbReference>
<dbReference type="Gene3D" id="1.10.1510.30">
    <property type="match status" value="1"/>
</dbReference>
<dbReference type="Gene3D" id="3.30.70.3160">
    <property type="match status" value="1"/>
</dbReference>
<dbReference type="Gene3D" id="3.30.2350.20">
    <property type="entry name" value="TruD, catalytic domain"/>
    <property type="match status" value="1"/>
</dbReference>
<dbReference type="HAMAP" id="MF_01082">
    <property type="entry name" value="TruD"/>
    <property type="match status" value="1"/>
</dbReference>
<dbReference type="InterPro" id="IPR020103">
    <property type="entry name" value="PsdUridine_synth_cat_dom_sf"/>
</dbReference>
<dbReference type="InterPro" id="IPR001656">
    <property type="entry name" value="PsdUridine_synth_TruD"/>
</dbReference>
<dbReference type="InterPro" id="IPR020119">
    <property type="entry name" value="PsdUridine_synth_TruD_CS"/>
</dbReference>
<dbReference type="InterPro" id="IPR011760">
    <property type="entry name" value="PsdUridine_synth_TruD_insert"/>
</dbReference>
<dbReference type="InterPro" id="IPR042214">
    <property type="entry name" value="TruD_catalytic"/>
</dbReference>
<dbReference type="InterPro" id="IPR050170">
    <property type="entry name" value="TruD_pseudoU_synthase"/>
</dbReference>
<dbReference type="NCBIfam" id="TIGR00094">
    <property type="entry name" value="tRNA_TruD_broad"/>
    <property type="match status" value="1"/>
</dbReference>
<dbReference type="PANTHER" id="PTHR47811">
    <property type="entry name" value="TRNA PSEUDOURIDINE SYNTHASE D"/>
    <property type="match status" value="1"/>
</dbReference>
<dbReference type="PANTHER" id="PTHR47811:SF1">
    <property type="entry name" value="TRNA PSEUDOURIDINE SYNTHASE D"/>
    <property type="match status" value="1"/>
</dbReference>
<dbReference type="Pfam" id="PF01142">
    <property type="entry name" value="TruD"/>
    <property type="match status" value="1"/>
</dbReference>
<dbReference type="PIRSF" id="PIRSF037016">
    <property type="entry name" value="Pseudouridin_synth_euk_prd"/>
    <property type="match status" value="1"/>
</dbReference>
<dbReference type="SUPFAM" id="SSF55120">
    <property type="entry name" value="Pseudouridine synthase"/>
    <property type="match status" value="1"/>
</dbReference>
<dbReference type="PROSITE" id="PS50984">
    <property type="entry name" value="TRUD"/>
    <property type="match status" value="1"/>
</dbReference>
<dbReference type="PROSITE" id="PS01268">
    <property type="entry name" value="UPF0024"/>
    <property type="match status" value="1"/>
</dbReference>
<sequence>MARDEHDSRYLTAELPGTGGLFKETPEDFLVEEISLYLPCGEGEHTYAVIEKRGITTLEAIRRLCRATGAPERDTGYAGMKDARGITRQTVSLPRVTPAEVMGLNIPGIRILSADRHRNKLRLGHLAGNRFRLRLRETVPDAADRARAILDVLARRGVPNRFGEQRYGIQGNSHLVGRAMLAGDWRGAVDLLMGDPAKVEGERWRAAIEAYRQGDLAGSLSLFPGHCRTERDVLQRLAKRPDDFERAVHGVHPRLKKLYLSACQSALFDRVLETRLQTIDHVMEGDLAWKHDNGACFLVTDAKAEAPRAERFEISPTGPLFGCRMTSPEGEPAALEKSILDAAGLTPAAFNLAGGLRMEGERRPLRVPLEGPELSCEEEDLVLRFSLPRGSYATAVLREVMKRPGNGA</sequence>
<accession>P60347</accession>
<reference key="1">
    <citation type="journal article" date="2003" name="Science">
        <title>Genome of Geobacter sulfurreducens: metal reduction in subsurface environments.</title>
        <authorList>
            <person name="Methe B.A."/>
            <person name="Nelson K.E."/>
            <person name="Eisen J.A."/>
            <person name="Paulsen I.T."/>
            <person name="Nelson W.C."/>
            <person name="Heidelberg J.F."/>
            <person name="Wu D."/>
            <person name="Wu M."/>
            <person name="Ward N.L."/>
            <person name="Beanan M.J."/>
            <person name="Dodson R.J."/>
            <person name="Madupu R."/>
            <person name="Brinkac L.M."/>
            <person name="Daugherty S.C."/>
            <person name="DeBoy R.T."/>
            <person name="Durkin A.S."/>
            <person name="Gwinn M.L."/>
            <person name="Kolonay J.F."/>
            <person name="Sullivan S.A."/>
            <person name="Haft D.H."/>
            <person name="Selengut J."/>
            <person name="Davidsen T.M."/>
            <person name="Zafar N."/>
            <person name="White O."/>
            <person name="Tran B."/>
            <person name="Romero C."/>
            <person name="Forberger H.A."/>
            <person name="Weidman J.F."/>
            <person name="Khouri H.M."/>
            <person name="Feldblyum T.V."/>
            <person name="Utterback T.R."/>
            <person name="Van Aken S.E."/>
            <person name="Lovley D.R."/>
            <person name="Fraser C.M."/>
        </authorList>
    </citation>
    <scope>NUCLEOTIDE SEQUENCE [LARGE SCALE GENOMIC DNA]</scope>
    <source>
        <strain>ATCC 51573 / DSM 12127 / PCA</strain>
    </source>
</reference>
<proteinExistence type="inferred from homology"/>
<name>TRUD_GEOSL</name>
<organism>
    <name type="scientific">Geobacter sulfurreducens (strain ATCC 51573 / DSM 12127 / PCA)</name>
    <dbReference type="NCBI Taxonomy" id="243231"/>
    <lineage>
        <taxon>Bacteria</taxon>
        <taxon>Pseudomonadati</taxon>
        <taxon>Thermodesulfobacteriota</taxon>
        <taxon>Desulfuromonadia</taxon>
        <taxon>Geobacterales</taxon>
        <taxon>Geobacteraceae</taxon>
        <taxon>Geobacter</taxon>
    </lineage>
</organism>
<evidence type="ECO:0000255" key="1">
    <source>
        <dbReference type="HAMAP-Rule" id="MF_01082"/>
    </source>
</evidence>